<evidence type="ECO:0000255" key="1"/>
<evidence type="ECO:0000255" key="2">
    <source>
        <dbReference type="PROSITE-ProRule" id="PRU00114"/>
    </source>
</evidence>
<evidence type="ECO:0000256" key="3">
    <source>
        <dbReference type="SAM" id="MobiDB-lite"/>
    </source>
</evidence>
<evidence type="ECO:0000269" key="4">
    <source>
    </source>
</evidence>
<evidence type="ECO:0000269" key="5">
    <source>
    </source>
</evidence>
<evidence type="ECO:0000269" key="6">
    <source>
    </source>
</evidence>
<evidence type="ECO:0000269" key="7">
    <source>
    </source>
</evidence>
<evidence type="ECO:0000305" key="8"/>
<protein>
    <recommendedName>
        <fullName>Protein OPG185</fullName>
    </recommendedName>
    <alternativeName>
        <fullName>Hemagglutinin</fullName>
    </alternativeName>
</protein>
<comment type="function">
    <text evidence="5 6">Prevents cell to cell fusion by interacting with and directing the viral OPG040 protein on the host plasma membrane. The OPG185-OPG040 complex associates with components of the entry fusion complex (EFC) presumably to avoid superinfection and syncytium formation. Via its interaction with C3/VCP protein, protects the infected cell and probably also the extracellular enveloped virus from complement attack.</text>
</comment>
<comment type="subunit">
    <text evidence="4 7">Heterodimerizes with OPG040. The heterodimer OPG185-OPG040 interacts with components of the entry fusion complex OPG143 and OPG094. Heterodimer with C3/VPC protein; disulfide-linked.</text>
</comment>
<comment type="subcellular location">
    <subcellularLocation>
        <location evidence="8">Virion membrane</location>
        <topology evidence="8">Single-pass type I membrane protein</topology>
    </subcellularLocation>
    <subcellularLocation>
        <location>Host membrane</location>
        <topology>Single-pass type I membrane protein</topology>
    </subcellularLocation>
    <text>Component of extracellular enveloped virus (EEV) but not intracellular mature virus (IMV). Component of the outermost membrane of EEV.</text>
</comment>
<comment type="induction">
    <text>Expressed in the early phase of the viral replicative cycle.</text>
</comment>
<comment type="PTM">
    <text>Glycosylated; contains phosphate and sulfate-substituted glycans. O-glycosylation is required for hemagglutination and hemadsorption activities of infected cell membranes.</text>
</comment>
<comment type="similarity">
    <text evidence="8">Belongs to the orthopoxvirus OPG185 family.</text>
</comment>
<sequence length="314" mass="34678">MTRLPILLLLISLVYATPFPQTSKKIGDDATLSCNRNNTNDYVVMSAWYKEPNSIILLAAKSDVLYFDNYTKDKISYDSPYDDLVTTITIKSLTARDAGTYVCAFFMTSTTNDTDKVDYEEYSTELIVNTDSESTIDIILSGSTHSPETSSKKPDYIDNSNCSSVFEIATPEPITDNVEDHTDTVTYTSDSINTVSASSGESTTDETPEPITDKEDHTVTDTVSYTTVSTSSGIVTTKSTTDDADLYDTYNDNDTVPPTTVGGSTTSISNYKTKDFVEIFGITALIILSAVAIFCITYYIYNKRSRKYKTENKV</sequence>
<organismHost>
    <name type="scientific">Bos taurus</name>
    <name type="common">Bovine</name>
    <dbReference type="NCBI Taxonomy" id="9913"/>
</organismHost>
<reference key="1">
    <citation type="journal article" date="1991" name="J. Gen. Virol.">
        <title>Nucleotide sequence of 42 kbp of vaccinia virus strain WR from near the right inverted terminal repeat.</title>
        <authorList>
            <person name="Smith G.L."/>
            <person name="Chan Y.S."/>
            <person name="Howard S.T."/>
        </authorList>
    </citation>
    <scope>NUCLEOTIDE SEQUENCE [GENOMIC DNA]</scope>
</reference>
<reference key="2">
    <citation type="journal article" date="1992" name="Virology">
        <title>Sequences of the raccoon poxvirus hemagglutinin protein.</title>
        <authorList>
            <person name="Cavallaro K.F."/>
            <person name="Esposito J.J."/>
        </authorList>
    </citation>
    <scope>NUCLEOTIDE SEQUENCE [GENOMIC DNA]</scope>
</reference>
<reference key="3">
    <citation type="submission" date="2003-02" db="EMBL/GenBank/DDBJ databases">
        <title>Sequencing of the coding region of Vaccinia-WR to an average 9-fold redundancy and an error rate of 0.16/10kb.</title>
        <authorList>
            <person name="Esposito J.J."/>
            <person name="Frace A.M."/>
            <person name="Sammons S.A."/>
            <person name="Olsen-Rasmussen M."/>
            <person name="Osborne J."/>
            <person name="Wohlhueter R."/>
        </authorList>
    </citation>
    <scope>NUCLEOTIDE SEQUENCE [LARGE SCALE GENOMIC DNA]</scope>
</reference>
<reference key="4">
    <citation type="journal article" date="1998" name="Proc. Natl. Acad. Sci. U.S.A.">
        <title>Extracellular enveloped vaccinia virus is resistant to complement because of incorporation of host complement control proteins into its envelope.</title>
        <authorList>
            <person name="Vanderplasschen A."/>
            <person name="Mathew E."/>
            <person name="Hollinshead M."/>
            <person name="Sim R.B."/>
            <person name="Smith G.L."/>
        </authorList>
    </citation>
    <scope>SUBCELLULAR LOCATION</scope>
</reference>
<reference key="5">
    <citation type="journal article" date="2006" name="Virol. J.">
        <title>Pox proteomics: mass spectrometry analysis and identification of Vaccinia virion proteins.</title>
        <authorList>
            <person name="Yoder J.D."/>
            <person name="Chen T.S."/>
            <person name="Gagnier C.R."/>
            <person name="Vemulapalli S."/>
            <person name="Maier C.S."/>
            <person name="Hruby D.E."/>
        </authorList>
    </citation>
    <scope>IDENTIFICATION BY MASS SPECTROMETRY</scope>
</reference>
<reference key="6">
    <citation type="journal article" date="2008" name="J. Virol.">
        <title>Vaccinia virus A56/K2 fusion regulatory protein interacts with the A16 and G9 subunits of the entry fusion complex.</title>
        <authorList>
            <person name="Wagenaar T.R."/>
            <person name="Ojeda S."/>
            <person name="Moss B."/>
        </authorList>
    </citation>
    <scope>INTERACTION WITH A16 AND G9</scope>
</reference>
<reference key="7">
    <citation type="journal article" date="2008" name="Virology">
        <title>The vaccinia virus fusion inhibitor proteins SPI-3 (K2) and HA (A56) expressed by infected cells reduce the entry of superinfecting virus.</title>
        <authorList>
            <person name="Turner P.C."/>
            <person name="Moyer R.W."/>
        </authorList>
    </citation>
    <scope>FUNCTION</scope>
</reference>
<reference key="8">
    <citation type="journal article" date="2009" name="J. Virol.">
        <title>Expression of the A56 and K2 proteins is sufficient to inhibit vaccinia virus entry and cell fusion.</title>
        <authorList>
            <person name="Wagenaar T.R."/>
            <person name="Moss B."/>
        </authorList>
    </citation>
    <scope>FUNCTION</scope>
</reference>
<reference key="9">
    <citation type="journal article" date="2010" name="J. Virol.">
        <title>Poxvirus complement control proteins are expressed on the cell surface through an intermolecular disulfide bridge with the viral A56 protein.</title>
        <authorList>
            <person name="DeHaven B.C."/>
            <person name="Girgis N.M."/>
            <person name="Xiao Y."/>
            <person name="Hudson P.N."/>
            <person name="Olson V.A."/>
            <person name="Damon I.K."/>
            <person name="Isaacs S.N."/>
        </authorList>
    </citation>
    <scope>INTERMOLECULAR DISULFIDE BOND</scope>
</reference>
<reference key="10">
    <citation type="journal article" date="2011" name="J. Gen. Virol.">
        <title>The vaccinia virus A56 protein: a multifunctional transmembrane glycoprotein that anchors two secreted viral proteins.</title>
        <authorList>
            <person name="Dehaven B.C."/>
            <person name="Gupta K."/>
            <person name="Isaacs S.N."/>
        </authorList>
    </citation>
    <scope>INTERACTION WITH OPG040 AND VCP</scope>
    <scope>SUBCELLULAR LOCATION</scope>
</reference>
<name>HEMA_VACCW</name>
<feature type="signal peptide" evidence="1">
    <location>
        <begin position="1"/>
        <end position="16"/>
    </location>
</feature>
<feature type="chain" id="PRO_0000040568" description="Protein OPG185">
    <location>
        <begin position="17"/>
        <end position="314"/>
    </location>
</feature>
<feature type="topological domain" description="Virion surface" evidence="1">
    <location>
        <begin position="17"/>
        <end position="278"/>
    </location>
</feature>
<feature type="transmembrane region" description="Helical" evidence="1">
    <location>
        <begin position="279"/>
        <end position="302"/>
    </location>
</feature>
<feature type="topological domain" description="Intravirion" evidence="1">
    <location>
        <begin position="303"/>
        <end position="314"/>
    </location>
</feature>
<feature type="domain" description="Ig-like V-type">
    <location>
        <begin position="17"/>
        <end position="121"/>
    </location>
</feature>
<feature type="region of interest" description="Disordered" evidence="3">
    <location>
        <begin position="193"/>
        <end position="214"/>
    </location>
</feature>
<feature type="compositionally biased region" description="Polar residues" evidence="3">
    <location>
        <begin position="193"/>
        <end position="202"/>
    </location>
</feature>
<feature type="glycosylation site" description="N-linked (GlcNAc...) asparagine; by host" evidence="1">
    <location>
        <position position="37"/>
    </location>
</feature>
<feature type="glycosylation site" description="N-linked (GlcNAc...) asparagine; by host" evidence="1">
    <location>
        <position position="69"/>
    </location>
</feature>
<feature type="glycosylation site" description="N-linked (GlcNAc...) asparagine; by host" evidence="1">
    <location>
        <position position="112"/>
    </location>
</feature>
<feature type="glycosylation site" description="N-linked (GlcNAc...) asparagine; by host" evidence="1">
    <location>
        <position position="161"/>
    </location>
</feature>
<feature type="glycosylation site" description="N-linked (GlcNAc...) asparagine; by host" evidence="1">
    <location>
        <position position="253"/>
    </location>
</feature>
<feature type="disulfide bond" evidence="2">
    <location>
        <begin position="34"/>
        <end position="103"/>
    </location>
</feature>
<feature type="disulfide bond" description="Interchain (with C-20 in complement control protein C3)" evidence="2">
    <location>
        <position position="162"/>
    </location>
</feature>
<proteinExistence type="evidence at protein level"/>
<organism>
    <name type="scientific">Vaccinia virus (strain Western Reserve)</name>
    <name type="common">VACV</name>
    <name type="synonym">Vaccinia virus (strain WR)</name>
    <dbReference type="NCBI Taxonomy" id="10254"/>
    <lineage>
        <taxon>Viruses</taxon>
        <taxon>Varidnaviria</taxon>
        <taxon>Bamfordvirae</taxon>
        <taxon>Nucleocytoviricota</taxon>
        <taxon>Pokkesviricetes</taxon>
        <taxon>Chitovirales</taxon>
        <taxon>Poxviridae</taxon>
        <taxon>Chordopoxvirinae</taxon>
        <taxon>Orthopoxvirus</taxon>
        <taxon>Vaccinia virus</taxon>
    </lineage>
</organism>
<accession>Q01218</accession>
<accession>Q76ZM3</accession>
<dbReference type="EMBL" id="D11079">
    <property type="protein sequence ID" value="BAA01829.1"/>
    <property type="molecule type" value="Genomic_DNA"/>
</dbReference>
<dbReference type="EMBL" id="M93956">
    <property type="protein sequence ID" value="AAA48252.1"/>
    <property type="molecule type" value="Genomic_DNA"/>
</dbReference>
<dbReference type="EMBL" id="AY243312">
    <property type="protein sequence ID" value="AAO89460.1"/>
    <property type="molecule type" value="Genomic_DNA"/>
</dbReference>
<dbReference type="PIR" id="JQ1793">
    <property type="entry name" value="JQ1793"/>
</dbReference>
<dbReference type="RefSeq" id="YP_233063.1">
    <property type="nucleotide sequence ID" value="NC_006998.1"/>
</dbReference>
<dbReference type="SMR" id="Q01218"/>
<dbReference type="IntAct" id="Q01218">
    <property type="interactions" value="6"/>
</dbReference>
<dbReference type="MINT" id="Q01218"/>
<dbReference type="TCDB" id="1.G.11.1.1">
    <property type="family name" value="the poxvirus cell entry protein complex (pep-c) family"/>
</dbReference>
<dbReference type="GlyCosmos" id="Q01218">
    <property type="glycosylation" value="5 sites, No reported glycans"/>
</dbReference>
<dbReference type="DNASU" id="3707652"/>
<dbReference type="GeneID" id="3707652"/>
<dbReference type="KEGG" id="vg:3707652"/>
<dbReference type="Proteomes" id="UP000000344">
    <property type="component" value="Genome"/>
</dbReference>
<dbReference type="GO" id="GO:0033644">
    <property type="term" value="C:host cell membrane"/>
    <property type="evidence" value="ECO:0007669"/>
    <property type="project" value="UniProtKB-SubCell"/>
</dbReference>
<dbReference type="GO" id="GO:0016020">
    <property type="term" value="C:membrane"/>
    <property type="evidence" value="ECO:0007669"/>
    <property type="project" value="UniProtKB-KW"/>
</dbReference>
<dbReference type="GO" id="GO:0019031">
    <property type="term" value="C:viral envelope"/>
    <property type="evidence" value="ECO:0007669"/>
    <property type="project" value="UniProtKB-KW"/>
</dbReference>
<dbReference type="GO" id="GO:0055036">
    <property type="term" value="C:virion membrane"/>
    <property type="evidence" value="ECO:0007669"/>
    <property type="project" value="UniProtKB-SubCell"/>
</dbReference>
<dbReference type="Gene3D" id="2.60.40.10">
    <property type="entry name" value="Immunoglobulins"/>
    <property type="match status" value="1"/>
</dbReference>
<dbReference type="InterPro" id="IPR007110">
    <property type="entry name" value="Ig-like_dom"/>
</dbReference>
<dbReference type="InterPro" id="IPR036179">
    <property type="entry name" value="Ig-like_dom_sf"/>
</dbReference>
<dbReference type="InterPro" id="IPR013783">
    <property type="entry name" value="Ig-like_fold"/>
</dbReference>
<dbReference type="InterPro" id="IPR003599">
    <property type="entry name" value="Ig_sub"/>
</dbReference>
<dbReference type="InterPro" id="IPR013106">
    <property type="entry name" value="Ig_V-set"/>
</dbReference>
<dbReference type="Pfam" id="PF07686">
    <property type="entry name" value="V-set"/>
    <property type="match status" value="1"/>
</dbReference>
<dbReference type="SMART" id="SM00409">
    <property type="entry name" value="IG"/>
    <property type="match status" value="1"/>
</dbReference>
<dbReference type="SUPFAM" id="SSF48726">
    <property type="entry name" value="Immunoglobulin"/>
    <property type="match status" value="1"/>
</dbReference>
<dbReference type="PROSITE" id="PS50835">
    <property type="entry name" value="IG_LIKE"/>
    <property type="match status" value="1"/>
</dbReference>
<keyword id="KW-1015">Disulfide bond</keyword>
<keyword id="KW-0244">Early protein</keyword>
<keyword id="KW-0325">Glycoprotein</keyword>
<keyword id="KW-0348">Hemagglutinin</keyword>
<keyword id="KW-1043">Host membrane</keyword>
<keyword id="KW-0393">Immunoglobulin domain</keyword>
<keyword id="KW-0426">Late protein</keyword>
<keyword id="KW-0472">Membrane</keyword>
<keyword id="KW-1185">Reference proteome</keyword>
<keyword id="KW-0732">Signal</keyword>
<keyword id="KW-0812">Transmembrane</keyword>
<keyword id="KW-1133">Transmembrane helix</keyword>
<keyword id="KW-0261">Viral envelope protein</keyword>
<keyword id="KW-0946">Virion</keyword>
<gene>
    <name type="primary">OPG185</name>
    <name type="synonym">HA</name>
    <name type="ordered locus">VACWR181</name>
    <name type="ORF">A56R</name>
</gene>